<comment type="function">
    <text evidence="1">Cell wall formation. Catalyzes the addition of glutamate to the nucleotide precursor UDP-N-acetylmuramoyl-L-alanine (UMA).</text>
</comment>
<comment type="catalytic activity">
    <reaction evidence="1">
        <text>UDP-N-acetyl-alpha-D-muramoyl-L-alanine + D-glutamate + ATP = UDP-N-acetyl-alpha-D-muramoyl-L-alanyl-D-glutamate + ADP + phosphate + H(+)</text>
        <dbReference type="Rhea" id="RHEA:16429"/>
        <dbReference type="ChEBI" id="CHEBI:15378"/>
        <dbReference type="ChEBI" id="CHEBI:29986"/>
        <dbReference type="ChEBI" id="CHEBI:30616"/>
        <dbReference type="ChEBI" id="CHEBI:43474"/>
        <dbReference type="ChEBI" id="CHEBI:83898"/>
        <dbReference type="ChEBI" id="CHEBI:83900"/>
        <dbReference type="ChEBI" id="CHEBI:456216"/>
        <dbReference type="EC" id="6.3.2.9"/>
    </reaction>
</comment>
<comment type="pathway">
    <text evidence="1">Cell wall biogenesis; peptidoglycan biosynthesis.</text>
</comment>
<comment type="subcellular location">
    <subcellularLocation>
        <location evidence="1">Cytoplasm</location>
    </subcellularLocation>
</comment>
<comment type="similarity">
    <text evidence="1">Belongs to the MurCDEF family.</text>
</comment>
<gene>
    <name evidence="1" type="primary">murD</name>
    <name type="ordered locus">Maqu_2454</name>
</gene>
<accession>A1U3G0</accession>
<protein>
    <recommendedName>
        <fullName evidence="1">UDP-N-acetylmuramoylalanine--D-glutamate ligase</fullName>
        <ecNumber evidence="1">6.3.2.9</ecNumber>
    </recommendedName>
    <alternativeName>
        <fullName evidence="1">D-glutamic acid-adding enzyme</fullName>
    </alternativeName>
    <alternativeName>
        <fullName evidence="1">UDP-N-acetylmuramoyl-L-alanyl-D-glutamate synthetase</fullName>
    </alternativeName>
</protein>
<organism>
    <name type="scientific">Marinobacter nauticus (strain ATCC 700491 / DSM 11845 / VT8)</name>
    <name type="common">Marinobacter aquaeolei</name>
    <dbReference type="NCBI Taxonomy" id="351348"/>
    <lineage>
        <taxon>Bacteria</taxon>
        <taxon>Pseudomonadati</taxon>
        <taxon>Pseudomonadota</taxon>
        <taxon>Gammaproteobacteria</taxon>
        <taxon>Pseudomonadales</taxon>
        <taxon>Marinobacteraceae</taxon>
        <taxon>Marinobacter</taxon>
    </lineage>
</organism>
<dbReference type="EC" id="6.3.2.9" evidence="1"/>
<dbReference type="EMBL" id="CP000514">
    <property type="protein sequence ID" value="ABM19529.1"/>
    <property type="molecule type" value="Genomic_DNA"/>
</dbReference>
<dbReference type="RefSeq" id="WP_011785913.1">
    <property type="nucleotide sequence ID" value="NC_008740.1"/>
</dbReference>
<dbReference type="SMR" id="A1U3G0"/>
<dbReference type="STRING" id="351348.Maqu_2454"/>
<dbReference type="KEGG" id="maq:Maqu_2454"/>
<dbReference type="eggNOG" id="COG0771">
    <property type="taxonomic scope" value="Bacteria"/>
</dbReference>
<dbReference type="HOGENOM" id="CLU_032540_1_0_6"/>
<dbReference type="OrthoDB" id="9809796at2"/>
<dbReference type="UniPathway" id="UPA00219"/>
<dbReference type="Proteomes" id="UP000000998">
    <property type="component" value="Chromosome"/>
</dbReference>
<dbReference type="GO" id="GO:0005737">
    <property type="term" value="C:cytoplasm"/>
    <property type="evidence" value="ECO:0007669"/>
    <property type="project" value="UniProtKB-SubCell"/>
</dbReference>
<dbReference type="GO" id="GO:0005524">
    <property type="term" value="F:ATP binding"/>
    <property type="evidence" value="ECO:0007669"/>
    <property type="project" value="UniProtKB-UniRule"/>
</dbReference>
<dbReference type="GO" id="GO:0008764">
    <property type="term" value="F:UDP-N-acetylmuramoylalanine-D-glutamate ligase activity"/>
    <property type="evidence" value="ECO:0007669"/>
    <property type="project" value="UniProtKB-UniRule"/>
</dbReference>
<dbReference type="GO" id="GO:0051301">
    <property type="term" value="P:cell division"/>
    <property type="evidence" value="ECO:0007669"/>
    <property type="project" value="UniProtKB-KW"/>
</dbReference>
<dbReference type="GO" id="GO:0071555">
    <property type="term" value="P:cell wall organization"/>
    <property type="evidence" value="ECO:0007669"/>
    <property type="project" value="UniProtKB-KW"/>
</dbReference>
<dbReference type="GO" id="GO:0009252">
    <property type="term" value="P:peptidoglycan biosynthetic process"/>
    <property type="evidence" value="ECO:0007669"/>
    <property type="project" value="UniProtKB-UniRule"/>
</dbReference>
<dbReference type="GO" id="GO:0008360">
    <property type="term" value="P:regulation of cell shape"/>
    <property type="evidence" value="ECO:0007669"/>
    <property type="project" value="UniProtKB-KW"/>
</dbReference>
<dbReference type="Gene3D" id="3.90.190.20">
    <property type="entry name" value="Mur ligase, C-terminal domain"/>
    <property type="match status" value="1"/>
</dbReference>
<dbReference type="Gene3D" id="3.40.1190.10">
    <property type="entry name" value="Mur-like, catalytic domain"/>
    <property type="match status" value="1"/>
</dbReference>
<dbReference type="Gene3D" id="3.40.50.720">
    <property type="entry name" value="NAD(P)-binding Rossmann-like Domain"/>
    <property type="match status" value="1"/>
</dbReference>
<dbReference type="HAMAP" id="MF_00639">
    <property type="entry name" value="MurD"/>
    <property type="match status" value="1"/>
</dbReference>
<dbReference type="InterPro" id="IPR036565">
    <property type="entry name" value="Mur-like_cat_sf"/>
</dbReference>
<dbReference type="InterPro" id="IPR004101">
    <property type="entry name" value="Mur_ligase_C"/>
</dbReference>
<dbReference type="InterPro" id="IPR036615">
    <property type="entry name" value="Mur_ligase_C_dom_sf"/>
</dbReference>
<dbReference type="InterPro" id="IPR013221">
    <property type="entry name" value="Mur_ligase_cen"/>
</dbReference>
<dbReference type="InterPro" id="IPR005762">
    <property type="entry name" value="MurD"/>
</dbReference>
<dbReference type="NCBIfam" id="TIGR01087">
    <property type="entry name" value="murD"/>
    <property type="match status" value="1"/>
</dbReference>
<dbReference type="PANTHER" id="PTHR43692">
    <property type="entry name" value="UDP-N-ACETYLMURAMOYLALANINE--D-GLUTAMATE LIGASE"/>
    <property type="match status" value="1"/>
</dbReference>
<dbReference type="PANTHER" id="PTHR43692:SF1">
    <property type="entry name" value="UDP-N-ACETYLMURAMOYLALANINE--D-GLUTAMATE LIGASE"/>
    <property type="match status" value="1"/>
</dbReference>
<dbReference type="Pfam" id="PF02875">
    <property type="entry name" value="Mur_ligase_C"/>
    <property type="match status" value="1"/>
</dbReference>
<dbReference type="Pfam" id="PF08245">
    <property type="entry name" value="Mur_ligase_M"/>
    <property type="match status" value="1"/>
</dbReference>
<dbReference type="Pfam" id="PF21799">
    <property type="entry name" value="MurD-like_N"/>
    <property type="match status" value="1"/>
</dbReference>
<dbReference type="SUPFAM" id="SSF51984">
    <property type="entry name" value="MurCD N-terminal domain"/>
    <property type="match status" value="1"/>
</dbReference>
<dbReference type="SUPFAM" id="SSF53623">
    <property type="entry name" value="MurD-like peptide ligases, catalytic domain"/>
    <property type="match status" value="1"/>
</dbReference>
<dbReference type="SUPFAM" id="SSF53244">
    <property type="entry name" value="MurD-like peptide ligases, peptide-binding domain"/>
    <property type="match status" value="1"/>
</dbReference>
<sequence length="446" mass="47530">MSVIVSDRRTLIVGLGKTGLSCVRYLSGQGREIAVADSRLQPPGLDELKAGWPDVPVYLGDFDEALFAGFNELVVSPGISIAEPAIAGAAARGARIRGDIDLFADAADAPIIAITGSNGKTTVTTLVGEMARAAGRNVQVGGNIGTPALDLLEQGADLYVLELSSFQLETTEELGALAATVLNVSDDHMDRYPDKMAYFQAKQRIYRGCKNAIVNLDDALSTPMARDTLRFLCFGFNRVNPETFSTRDDDEGTWITWGLENLLLASELQLMGRHNISNVMAALALGYAAGLAMEPMLEVARRFRGLPHRCESVRNLDGVDYINDSKGTNVGATVAAIESLVPESGKVILIAGGDGKGADFQPLAEPVAACCRALVLIGRDAGKISRAVGASVPQHRATSLQEAVSLARQAAEPGDRVLLSPACASFDMFRDYNDRGEQFRTLVEGL</sequence>
<reference key="1">
    <citation type="journal article" date="2011" name="Appl. Environ. Microbiol.">
        <title>Genomic potential of Marinobacter aquaeolei, a biogeochemical 'opportunitroph'.</title>
        <authorList>
            <person name="Singer E."/>
            <person name="Webb E.A."/>
            <person name="Nelson W.C."/>
            <person name="Heidelberg J.F."/>
            <person name="Ivanova N."/>
            <person name="Pati A."/>
            <person name="Edwards K.J."/>
        </authorList>
    </citation>
    <scope>NUCLEOTIDE SEQUENCE [LARGE SCALE GENOMIC DNA]</scope>
    <source>
        <strain>ATCC 700491 / DSM 11845 / VT8</strain>
    </source>
</reference>
<name>MURD_MARN8</name>
<proteinExistence type="inferred from homology"/>
<evidence type="ECO:0000255" key="1">
    <source>
        <dbReference type="HAMAP-Rule" id="MF_00639"/>
    </source>
</evidence>
<keyword id="KW-0067">ATP-binding</keyword>
<keyword id="KW-0131">Cell cycle</keyword>
<keyword id="KW-0132">Cell division</keyword>
<keyword id="KW-0133">Cell shape</keyword>
<keyword id="KW-0961">Cell wall biogenesis/degradation</keyword>
<keyword id="KW-0963">Cytoplasm</keyword>
<keyword id="KW-0436">Ligase</keyword>
<keyword id="KW-0547">Nucleotide-binding</keyword>
<keyword id="KW-0573">Peptidoglycan synthesis</keyword>
<feature type="chain" id="PRO_0000301436" description="UDP-N-acetylmuramoylalanine--D-glutamate ligase">
    <location>
        <begin position="1"/>
        <end position="446"/>
    </location>
</feature>
<feature type="binding site" evidence="1">
    <location>
        <begin position="116"/>
        <end position="122"/>
    </location>
    <ligand>
        <name>ATP</name>
        <dbReference type="ChEBI" id="CHEBI:30616"/>
    </ligand>
</feature>